<gene>
    <name type="ordered locus">BH3876</name>
</gene>
<reference key="1">
    <citation type="journal article" date="2000" name="Nucleic Acids Res.">
        <title>Complete genome sequence of the alkaliphilic bacterium Bacillus halodurans and genomic sequence comparison with Bacillus subtilis.</title>
        <authorList>
            <person name="Takami H."/>
            <person name="Nakasone K."/>
            <person name="Takaki Y."/>
            <person name="Maeno G."/>
            <person name="Sasaki R."/>
            <person name="Masui N."/>
            <person name="Fuji F."/>
            <person name="Hirama C."/>
            <person name="Nakamura Y."/>
            <person name="Ogasawara N."/>
            <person name="Kuhara S."/>
            <person name="Horikoshi K."/>
        </authorList>
    </citation>
    <scope>NUCLEOTIDE SEQUENCE [LARGE SCALE GENOMIC DNA]</scope>
    <source>
        <strain>ATCC BAA-125 / DSM 18197 / FERM 7344 / JCM 9153 / C-125</strain>
    </source>
</reference>
<proteinExistence type="inferred from homology"/>
<protein>
    <recommendedName>
        <fullName evidence="1">UPF0302 protein BH3876</fullName>
    </recommendedName>
</protein>
<sequence>MGKWVSVAEKRQFLKWFLTQQLKRKDAKRILEYLLQHYHLLEQVMFTEEIRGRERTLVISTLQSDEPGFAFYLYRRKIEDPIRALGELQANPADPIYLILHFHGKAQNHQYLQMLDSESREYIKRFKQFQAYKEETDSLIEAVLIENEKKMLLQQIDEALDLKDERRFKDLVKKLQELDRRSS</sequence>
<feature type="chain" id="PRO_0000216096" description="UPF0302 protein BH3876">
    <location>
        <begin position="1"/>
        <end position="183"/>
    </location>
</feature>
<name>Y3876_HALH5</name>
<accession>Q9K656</accession>
<organism>
    <name type="scientific">Halalkalibacterium halodurans (strain ATCC BAA-125 / DSM 18197 / FERM 7344 / JCM 9153 / C-125)</name>
    <name type="common">Bacillus halodurans</name>
    <dbReference type="NCBI Taxonomy" id="272558"/>
    <lineage>
        <taxon>Bacteria</taxon>
        <taxon>Bacillati</taxon>
        <taxon>Bacillota</taxon>
        <taxon>Bacilli</taxon>
        <taxon>Bacillales</taxon>
        <taxon>Bacillaceae</taxon>
        <taxon>Halalkalibacterium (ex Joshi et al. 2022)</taxon>
    </lineage>
</organism>
<keyword id="KW-1185">Reference proteome</keyword>
<dbReference type="EMBL" id="BA000004">
    <property type="protein sequence ID" value="BAB07595.1"/>
    <property type="molecule type" value="Genomic_DNA"/>
</dbReference>
<dbReference type="PIR" id="D84134">
    <property type="entry name" value="D84134"/>
</dbReference>
<dbReference type="RefSeq" id="WP_010900001.1">
    <property type="nucleotide sequence ID" value="NC_002570.2"/>
</dbReference>
<dbReference type="SMR" id="Q9K656"/>
<dbReference type="STRING" id="272558.gene:10729789"/>
<dbReference type="GeneID" id="87599422"/>
<dbReference type="KEGG" id="bha:BH3876"/>
<dbReference type="eggNOG" id="COG5582">
    <property type="taxonomic scope" value="Bacteria"/>
</dbReference>
<dbReference type="HOGENOM" id="CLU_126019_0_0_9"/>
<dbReference type="OrthoDB" id="2918735at2"/>
<dbReference type="Proteomes" id="UP000001258">
    <property type="component" value="Chromosome"/>
</dbReference>
<dbReference type="Gene3D" id="3.40.1530.30">
    <property type="entry name" value="Uncharacterised family UPF0302, N-terminal domain"/>
    <property type="match status" value="1"/>
</dbReference>
<dbReference type="Gene3D" id="4.10.810.10">
    <property type="entry name" value="Virus Scaffolding Protein, Chain A"/>
    <property type="match status" value="1"/>
</dbReference>
<dbReference type="HAMAP" id="MF_00760">
    <property type="entry name" value="UPF0302"/>
    <property type="match status" value="1"/>
</dbReference>
<dbReference type="InterPro" id="IPR014957">
    <property type="entry name" value="IDEAL_dom"/>
</dbReference>
<dbReference type="InterPro" id="IPR011188">
    <property type="entry name" value="UPF0302"/>
</dbReference>
<dbReference type="InterPro" id="IPR014963">
    <property type="entry name" value="UPF0302_N"/>
</dbReference>
<dbReference type="InterPro" id="IPR038091">
    <property type="entry name" value="UPF0302_N_sf"/>
</dbReference>
<dbReference type="InterPro" id="IPR027393">
    <property type="entry name" value="Virus_scaffolding_prot_C"/>
</dbReference>
<dbReference type="NCBIfam" id="NF002836">
    <property type="entry name" value="PRK03057.1"/>
    <property type="match status" value="1"/>
</dbReference>
<dbReference type="Pfam" id="PF08858">
    <property type="entry name" value="IDEAL"/>
    <property type="match status" value="1"/>
</dbReference>
<dbReference type="Pfam" id="PF08864">
    <property type="entry name" value="UPF0302"/>
    <property type="match status" value="1"/>
</dbReference>
<dbReference type="PIRSF" id="PIRSF007165">
    <property type="entry name" value="UCP007165"/>
    <property type="match status" value="1"/>
</dbReference>
<dbReference type="SMART" id="SM00914">
    <property type="entry name" value="IDEAL"/>
    <property type="match status" value="1"/>
</dbReference>
<comment type="similarity">
    <text evidence="1">Belongs to the UPF0302 family.</text>
</comment>
<evidence type="ECO:0000255" key="1">
    <source>
        <dbReference type="HAMAP-Rule" id="MF_00760"/>
    </source>
</evidence>